<keyword id="KW-0067">ATP-binding</keyword>
<keyword id="KW-0106">Calcium</keyword>
<keyword id="KW-0418">Kinase</keyword>
<keyword id="KW-0449">Lipoprotein</keyword>
<keyword id="KW-0472">Membrane</keyword>
<keyword id="KW-0479">Metal-binding</keyword>
<keyword id="KW-0519">Myristate</keyword>
<keyword id="KW-0547">Nucleotide-binding</keyword>
<keyword id="KW-1185">Reference proteome</keyword>
<keyword id="KW-0677">Repeat</keyword>
<keyword id="KW-0723">Serine/threonine-protein kinase</keyword>
<keyword id="KW-0808">Transferase</keyword>
<evidence type="ECO:0000250" key="1">
    <source>
        <dbReference type="UniProtKB" id="Q06850"/>
    </source>
</evidence>
<evidence type="ECO:0000255" key="2"/>
<evidence type="ECO:0000255" key="3">
    <source>
        <dbReference type="PROSITE-ProRule" id="PRU00159"/>
    </source>
</evidence>
<evidence type="ECO:0000255" key="4">
    <source>
        <dbReference type="PROSITE-ProRule" id="PRU00448"/>
    </source>
</evidence>
<evidence type="ECO:0000256" key="5">
    <source>
        <dbReference type="SAM" id="MobiDB-lite"/>
    </source>
</evidence>
<evidence type="ECO:0000269" key="6">
    <source>
    </source>
</evidence>
<evidence type="ECO:0000303" key="7">
    <source>
    </source>
</evidence>
<evidence type="ECO:0000305" key="8"/>
<evidence type="ECO:0000312" key="9">
    <source>
        <dbReference type="EMBL" id="BAB92912.1"/>
    </source>
</evidence>
<evidence type="ECO:0000312" key="10">
    <source>
        <dbReference type="EMBL" id="BAS75067.1"/>
    </source>
</evidence>
<evidence type="ECO:0000312" key="11">
    <source>
        <dbReference type="EMBL" id="EEE55627.1"/>
    </source>
</evidence>
<organism>
    <name type="scientific">Oryza sativa subsp. japonica</name>
    <name type="common">Rice</name>
    <dbReference type="NCBI Taxonomy" id="39947"/>
    <lineage>
        <taxon>Eukaryota</taxon>
        <taxon>Viridiplantae</taxon>
        <taxon>Streptophyta</taxon>
        <taxon>Embryophyta</taxon>
        <taxon>Tracheophyta</taxon>
        <taxon>Spermatophyta</taxon>
        <taxon>Magnoliopsida</taxon>
        <taxon>Liliopsida</taxon>
        <taxon>Poales</taxon>
        <taxon>Poaceae</taxon>
        <taxon>BOP clade</taxon>
        <taxon>Oryzoideae</taxon>
        <taxon>Oryzeae</taxon>
        <taxon>Oryzinae</taxon>
        <taxon>Oryza</taxon>
        <taxon>Oryza sativa</taxon>
    </lineage>
</organism>
<gene>
    <name evidence="7" type="primary">CPK3</name>
    <name evidence="10" type="ordered locus">Os01g0832300</name>
    <name evidence="8" type="ordered locus">LOC_Os01g61590</name>
    <name evidence="11" type="ORF">OsJ_03967</name>
    <name evidence="9" type="ORF">P0460C04.4</name>
</gene>
<protein>
    <recommendedName>
        <fullName evidence="8">Calcium-dependent protein kinase 3</fullName>
        <shortName evidence="8">OsCDPK3</shortName>
        <shortName evidence="7">OsCPK3</shortName>
        <ecNumber evidence="8">2.7.11.1</ecNumber>
    </recommendedName>
</protein>
<dbReference type="EC" id="2.7.11.1" evidence="8"/>
<dbReference type="EMBL" id="AP004366">
    <property type="protein sequence ID" value="BAB92912.1"/>
    <property type="molecule type" value="Genomic_DNA"/>
</dbReference>
<dbReference type="EMBL" id="AP008207">
    <property type="protein sequence ID" value="BAF06620.2"/>
    <property type="status" value="ALT_SEQ"/>
    <property type="molecule type" value="Genomic_DNA"/>
</dbReference>
<dbReference type="EMBL" id="AP014957">
    <property type="protein sequence ID" value="BAS75067.1"/>
    <property type="molecule type" value="Genomic_DNA"/>
</dbReference>
<dbReference type="EMBL" id="CM000138">
    <property type="protein sequence ID" value="EEE55627.1"/>
    <property type="molecule type" value="Genomic_DNA"/>
</dbReference>
<dbReference type="RefSeq" id="XP_015622474.1">
    <property type="nucleotide sequence ID" value="XM_015766988.1"/>
</dbReference>
<dbReference type="SMR" id="Q8LPZ7"/>
<dbReference type="FunCoup" id="Q8LPZ7">
    <property type="interactions" value="2131"/>
</dbReference>
<dbReference type="STRING" id="39947.Q8LPZ7"/>
<dbReference type="iPTMnet" id="Q8LPZ7"/>
<dbReference type="PaxDb" id="39947-Q8LPZ7"/>
<dbReference type="EnsemblPlants" id="Os01t0832300-00">
    <property type="protein sequence ID" value="Os01t0832300-00"/>
    <property type="gene ID" value="Os01g0832300"/>
</dbReference>
<dbReference type="Gramene" id="Os01t0832300-00">
    <property type="protein sequence ID" value="Os01t0832300-00"/>
    <property type="gene ID" value="Os01g0832300"/>
</dbReference>
<dbReference type="KEGG" id="dosa:Os01g0832300"/>
<dbReference type="eggNOG" id="KOG0032">
    <property type="taxonomic scope" value="Eukaryota"/>
</dbReference>
<dbReference type="HOGENOM" id="CLU_000288_37_4_1"/>
<dbReference type="InParanoid" id="Q8LPZ7"/>
<dbReference type="OMA" id="LEHEWIR"/>
<dbReference type="OrthoDB" id="40902at2759"/>
<dbReference type="Proteomes" id="UP000000763">
    <property type="component" value="Chromosome 1"/>
</dbReference>
<dbReference type="Proteomes" id="UP000007752">
    <property type="component" value="Chromosome 1"/>
</dbReference>
<dbReference type="Proteomes" id="UP000059680">
    <property type="component" value="Chromosome 1"/>
</dbReference>
<dbReference type="GO" id="GO:0005737">
    <property type="term" value="C:cytoplasm"/>
    <property type="evidence" value="ECO:0000318"/>
    <property type="project" value="GO_Central"/>
</dbReference>
<dbReference type="GO" id="GO:0005634">
    <property type="term" value="C:nucleus"/>
    <property type="evidence" value="ECO:0000318"/>
    <property type="project" value="GO_Central"/>
</dbReference>
<dbReference type="GO" id="GO:0005886">
    <property type="term" value="C:plasma membrane"/>
    <property type="evidence" value="ECO:0000318"/>
    <property type="project" value="GO_Central"/>
</dbReference>
<dbReference type="GO" id="GO:0005524">
    <property type="term" value="F:ATP binding"/>
    <property type="evidence" value="ECO:0007669"/>
    <property type="project" value="UniProtKB-KW"/>
</dbReference>
<dbReference type="GO" id="GO:0005509">
    <property type="term" value="F:calcium ion binding"/>
    <property type="evidence" value="ECO:0007669"/>
    <property type="project" value="InterPro"/>
</dbReference>
<dbReference type="GO" id="GO:0009931">
    <property type="term" value="F:calcium-dependent protein serine/threonine kinase activity"/>
    <property type="evidence" value="ECO:0000318"/>
    <property type="project" value="GO_Central"/>
</dbReference>
<dbReference type="GO" id="GO:0004683">
    <property type="term" value="F:calcium/calmodulin-dependent protein kinase activity"/>
    <property type="evidence" value="ECO:0000318"/>
    <property type="project" value="GO_Central"/>
</dbReference>
<dbReference type="GO" id="GO:0005516">
    <property type="term" value="F:calmodulin binding"/>
    <property type="evidence" value="ECO:0000318"/>
    <property type="project" value="GO_Central"/>
</dbReference>
<dbReference type="GO" id="GO:0106310">
    <property type="term" value="F:protein serine kinase activity"/>
    <property type="evidence" value="ECO:0007669"/>
    <property type="project" value="RHEA"/>
</dbReference>
<dbReference type="GO" id="GO:0035556">
    <property type="term" value="P:intracellular signal transduction"/>
    <property type="evidence" value="ECO:0000318"/>
    <property type="project" value="GO_Central"/>
</dbReference>
<dbReference type="CDD" id="cd00051">
    <property type="entry name" value="EFh"/>
    <property type="match status" value="1"/>
</dbReference>
<dbReference type="CDD" id="cd05117">
    <property type="entry name" value="STKc_CAMK"/>
    <property type="match status" value="1"/>
</dbReference>
<dbReference type="FunFam" id="3.30.200.20:FF:000004">
    <property type="entry name" value="Calcium-dependent protein kinase 1"/>
    <property type="match status" value="1"/>
</dbReference>
<dbReference type="FunFam" id="1.10.510.10:FF:000067">
    <property type="entry name" value="calcium-dependent protein kinase 13"/>
    <property type="match status" value="1"/>
</dbReference>
<dbReference type="FunFam" id="1.10.238.10:FF:000050">
    <property type="entry name" value="Calcium-dependent protein kinase 7"/>
    <property type="match status" value="1"/>
</dbReference>
<dbReference type="Gene3D" id="1.10.238.10">
    <property type="entry name" value="EF-hand"/>
    <property type="match status" value="1"/>
</dbReference>
<dbReference type="Gene3D" id="3.30.200.20">
    <property type="entry name" value="Phosphorylase Kinase, domain 1"/>
    <property type="match status" value="1"/>
</dbReference>
<dbReference type="Gene3D" id="1.10.510.10">
    <property type="entry name" value="Transferase(Phosphotransferase) domain 1"/>
    <property type="match status" value="1"/>
</dbReference>
<dbReference type="InterPro" id="IPR050205">
    <property type="entry name" value="CDPK_Ser/Thr_kinases"/>
</dbReference>
<dbReference type="InterPro" id="IPR011992">
    <property type="entry name" value="EF-hand-dom_pair"/>
</dbReference>
<dbReference type="InterPro" id="IPR018247">
    <property type="entry name" value="EF_Hand_1_Ca_BS"/>
</dbReference>
<dbReference type="InterPro" id="IPR002048">
    <property type="entry name" value="EF_hand_dom"/>
</dbReference>
<dbReference type="InterPro" id="IPR011009">
    <property type="entry name" value="Kinase-like_dom_sf"/>
</dbReference>
<dbReference type="InterPro" id="IPR000719">
    <property type="entry name" value="Prot_kinase_dom"/>
</dbReference>
<dbReference type="InterPro" id="IPR017441">
    <property type="entry name" value="Protein_kinase_ATP_BS"/>
</dbReference>
<dbReference type="InterPro" id="IPR008271">
    <property type="entry name" value="Ser/Thr_kinase_AS"/>
</dbReference>
<dbReference type="PANTHER" id="PTHR24349">
    <property type="entry name" value="SERINE/THREONINE-PROTEIN KINASE"/>
    <property type="match status" value="1"/>
</dbReference>
<dbReference type="Pfam" id="PF13499">
    <property type="entry name" value="EF-hand_7"/>
    <property type="match status" value="2"/>
</dbReference>
<dbReference type="Pfam" id="PF00069">
    <property type="entry name" value="Pkinase"/>
    <property type="match status" value="1"/>
</dbReference>
<dbReference type="SMART" id="SM00054">
    <property type="entry name" value="EFh"/>
    <property type="match status" value="4"/>
</dbReference>
<dbReference type="SMART" id="SM00220">
    <property type="entry name" value="S_TKc"/>
    <property type="match status" value="1"/>
</dbReference>
<dbReference type="SUPFAM" id="SSF47473">
    <property type="entry name" value="EF-hand"/>
    <property type="match status" value="1"/>
</dbReference>
<dbReference type="SUPFAM" id="SSF56112">
    <property type="entry name" value="Protein kinase-like (PK-like)"/>
    <property type="match status" value="1"/>
</dbReference>
<dbReference type="PROSITE" id="PS00018">
    <property type="entry name" value="EF_HAND_1"/>
    <property type="match status" value="3"/>
</dbReference>
<dbReference type="PROSITE" id="PS50222">
    <property type="entry name" value="EF_HAND_2"/>
    <property type="match status" value="4"/>
</dbReference>
<dbReference type="PROSITE" id="PS00107">
    <property type="entry name" value="PROTEIN_KINASE_ATP"/>
    <property type="match status" value="1"/>
</dbReference>
<dbReference type="PROSITE" id="PS50011">
    <property type="entry name" value="PROTEIN_KINASE_DOM"/>
    <property type="match status" value="1"/>
</dbReference>
<dbReference type="PROSITE" id="PS00108">
    <property type="entry name" value="PROTEIN_KINASE_ST"/>
    <property type="match status" value="1"/>
</dbReference>
<comment type="function">
    <text evidence="1">May play a role in signal transduction pathways that involve calcium as a second messenger.</text>
</comment>
<comment type="catalytic activity">
    <reaction evidence="8">
        <text>L-seryl-[protein] + ATP = O-phospho-L-seryl-[protein] + ADP + H(+)</text>
        <dbReference type="Rhea" id="RHEA:17989"/>
        <dbReference type="Rhea" id="RHEA-COMP:9863"/>
        <dbReference type="Rhea" id="RHEA-COMP:11604"/>
        <dbReference type="ChEBI" id="CHEBI:15378"/>
        <dbReference type="ChEBI" id="CHEBI:29999"/>
        <dbReference type="ChEBI" id="CHEBI:30616"/>
        <dbReference type="ChEBI" id="CHEBI:83421"/>
        <dbReference type="ChEBI" id="CHEBI:456216"/>
        <dbReference type="EC" id="2.7.11.1"/>
    </reaction>
</comment>
<comment type="catalytic activity">
    <reaction evidence="8">
        <text>L-threonyl-[protein] + ATP = O-phospho-L-threonyl-[protein] + ADP + H(+)</text>
        <dbReference type="Rhea" id="RHEA:46608"/>
        <dbReference type="Rhea" id="RHEA-COMP:11060"/>
        <dbReference type="Rhea" id="RHEA-COMP:11605"/>
        <dbReference type="ChEBI" id="CHEBI:15378"/>
        <dbReference type="ChEBI" id="CHEBI:30013"/>
        <dbReference type="ChEBI" id="CHEBI:30616"/>
        <dbReference type="ChEBI" id="CHEBI:61977"/>
        <dbReference type="ChEBI" id="CHEBI:456216"/>
        <dbReference type="EC" id="2.7.11.1"/>
    </reaction>
</comment>
<comment type="activity regulation">
    <text evidence="1">Activated by calcium. Autophosphorylation may play an important role in the regulation of the kinase activity.</text>
</comment>
<comment type="subcellular location">
    <subcellularLocation>
        <location evidence="8">Membrane</location>
        <topology evidence="8">Lipid-anchor</topology>
    </subcellularLocation>
</comment>
<comment type="tissue specificity">
    <text evidence="6">Expressed in roots and developing seeds.</text>
</comment>
<comment type="domain">
    <text evidence="1">There are 3 contiguous domains conserved in the CDPK subfamily: a kinase domain, an autoinhibitory (junction) domain and a calmodulin-like domain. The autoinhibitory domain (341-371) inactivates kinase activity under calcium-free conditions.</text>
</comment>
<comment type="similarity">
    <text evidence="8">Belongs to the protein kinase superfamily. Ser/Thr protein kinase family. CDPK subfamily.</text>
</comment>
<comment type="sequence caution" evidence="8">
    <conflict type="erroneous gene model prediction">
        <sequence resource="EMBL-CDS" id="BAF06620"/>
    </conflict>
</comment>
<reference key="1">
    <citation type="journal article" date="2002" name="Nature">
        <title>The genome sequence and structure of rice chromosome 1.</title>
        <authorList>
            <person name="Sasaki T."/>
            <person name="Matsumoto T."/>
            <person name="Yamamoto K."/>
            <person name="Sakata K."/>
            <person name="Baba T."/>
            <person name="Katayose Y."/>
            <person name="Wu J."/>
            <person name="Niimura Y."/>
            <person name="Cheng Z."/>
            <person name="Nagamura Y."/>
            <person name="Antonio B.A."/>
            <person name="Kanamori H."/>
            <person name="Hosokawa S."/>
            <person name="Masukawa M."/>
            <person name="Arikawa K."/>
            <person name="Chiden Y."/>
            <person name="Hayashi M."/>
            <person name="Okamoto M."/>
            <person name="Ando T."/>
            <person name="Aoki H."/>
            <person name="Arita K."/>
            <person name="Hamada M."/>
            <person name="Harada C."/>
            <person name="Hijishita S."/>
            <person name="Honda M."/>
            <person name="Ichikawa Y."/>
            <person name="Idonuma A."/>
            <person name="Iijima M."/>
            <person name="Ikeda M."/>
            <person name="Ikeno M."/>
            <person name="Ito S."/>
            <person name="Ito T."/>
            <person name="Ito Y."/>
            <person name="Ito Y."/>
            <person name="Iwabuchi A."/>
            <person name="Kamiya K."/>
            <person name="Karasawa W."/>
            <person name="Katagiri S."/>
            <person name="Kikuta A."/>
            <person name="Kobayashi N."/>
            <person name="Kono I."/>
            <person name="Machita K."/>
            <person name="Maehara T."/>
            <person name="Mizuno H."/>
            <person name="Mizubayashi T."/>
            <person name="Mukai Y."/>
            <person name="Nagasaki H."/>
            <person name="Nakashima M."/>
            <person name="Nakama Y."/>
            <person name="Nakamichi Y."/>
            <person name="Nakamura M."/>
            <person name="Namiki N."/>
            <person name="Negishi M."/>
            <person name="Ohta I."/>
            <person name="Ono N."/>
            <person name="Saji S."/>
            <person name="Sakai K."/>
            <person name="Shibata M."/>
            <person name="Shimokawa T."/>
            <person name="Shomura A."/>
            <person name="Song J."/>
            <person name="Takazaki Y."/>
            <person name="Terasawa K."/>
            <person name="Tsuji K."/>
            <person name="Waki K."/>
            <person name="Yamagata H."/>
            <person name="Yamane H."/>
            <person name="Yoshiki S."/>
            <person name="Yoshihara R."/>
            <person name="Yukawa K."/>
            <person name="Zhong H."/>
            <person name="Iwama H."/>
            <person name="Endo T."/>
            <person name="Ito H."/>
            <person name="Hahn J.H."/>
            <person name="Kim H.-I."/>
            <person name="Eun M.-Y."/>
            <person name="Yano M."/>
            <person name="Jiang J."/>
            <person name="Gojobori T."/>
        </authorList>
    </citation>
    <scope>NUCLEOTIDE SEQUENCE [LARGE SCALE GENOMIC DNA]</scope>
    <source>
        <strain>cv. Nipponbare</strain>
    </source>
</reference>
<reference key="2">
    <citation type="journal article" date="2005" name="Nature">
        <title>The map-based sequence of the rice genome.</title>
        <authorList>
            <consortium name="International rice genome sequencing project (IRGSP)"/>
        </authorList>
    </citation>
    <scope>NUCLEOTIDE SEQUENCE [LARGE SCALE GENOMIC DNA]</scope>
    <source>
        <strain>cv. Nipponbare</strain>
    </source>
</reference>
<reference key="3">
    <citation type="journal article" date="2008" name="Nucleic Acids Res.">
        <title>The rice annotation project database (RAP-DB): 2008 update.</title>
        <authorList>
            <consortium name="The rice annotation project (RAP)"/>
        </authorList>
    </citation>
    <scope>GENOME REANNOTATION</scope>
    <source>
        <strain>cv. Nipponbare</strain>
    </source>
</reference>
<reference key="4">
    <citation type="journal article" date="2013" name="Rice">
        <title>Improvement of the Oryza sativa Nipponbare reference genome using next generation sequence and optical map data.</title>
        <authorList>
            <person name="Kawahara Y."/>
            <person name="de la Bastide M."/>
            <person name="Hamilton J.P."/>
            <person name="Kanamori H."/>
            <person name="McCombie W.R."/>
            <person name="Ouyang S."/>
            <person name="Schwartz D.C."/>
            <person name="Tanaka T."/>
            <person name="Wu J."/>
            <person name="Zhou S."/>
            <person name="Childs K.L."/>
            <person name="Davidson R.M."/>
            <person name="Lin H."/>
            <person name="Quesada-Ocampo L."/>
            <person name="Vaillancourt B."/>
            <person name="Sakai H."/>
            <person name="Lee S.S."/>
            <person name="Kim J."/>
            <person name="Numa H."/>
            <person name="Itoh T."/>
            <person name="Buell C.R."/>
            <person name="Matsumoto T."/>
        </authorList>
    </citation>
    <scope>GENOME REANNOTATION</scope>
    <source>
        <strain>cv. Nipponbare</strain>
    </source>
</reference>
<reference key="5">
    <citation type="journal article" date="2005" name="PLoS Biol.">
        <title>The genomes of Oryza sativa: a history of duplications.</title>
        <authorList>
            <person name="Yu J."/>
            <person name="Wang J."/>
            <person name="Lin W."/>
            <person name="Li S."/>
            <person name="Li H."/>
            <person name="Zhou J."/>
            <person name="Ni P."/>
            <person name="Dong W."/>
            <person name="Hu S."/>
            <person name="Zeng C."/>
            <person name="Zhang J."/>
            <person name="Zhang Y."/>
            <person name="Li R."/>
            <person name="Xu Z."/>
            <person name="Li S."/>
            <person name="Li X."/>
            <person name="Zheng H."/>
            <person name="Cong L."/>
            <person name="Lin L."/>
            <person name="Yin J."/>
            <person name="Geng J."/>
            <person name="Li G."/>
            <person name="Shi J."/>
            <person name="Liu J."/>
            <person name="Lv H."/>
            <person name="Li J."/>
            <person name="Wang J."/>
            <person name="Deng Y."/>
            <person name="Ran L."/>
            <person name="Shi X."/>
            <person name="Wang X."/>
            <person name="Wu Q."/>
            <person name="Li C."/>
            <person name="Ren X."/>
            <person name="Wang J."/>
            <person name="Wang X."/>
            <person name="Li D."/>
            <person name="Liu D."/>
            <person name="Zhang X."/>
            <person name="Ji Z."/>
            <person name="Zhao W."/>
            <person name="Sun Y."/>
            <person name="Zhang Z."/>
            <person name="Bao J."/>
            <person name="Han Y."/>
            <person name="Dong L."/>
            <person name="Ji J."/>
            <person name="Chen P."/>
            <person name="Wu S."/>
            <person name="Liu J."/>
            <person name="Xiao Y."/>
            <person name="Bu D."/>
            <person name="Tan J."/>
            <person name="Yang L."/>
            <person name="Ye C."/>
            <person name="Zhang J."/>
            <person name="Xu J."/>
            <person name="Zhou Y."/>
            <person name="Yu Y."/>
            <person name="Zhang B."/>
            <person name="Zhuang S."/>
            <person name="Wei H."/>
            <person name="Liu B."/>
            <person name="Lei M."/>
            <person name="Yu H."/>
            <person name="Li Y."/>
            <person name="Xu H."/>
            <person name="Wei S."/>
            <person name="He X."/>
            <person name="Fang L."/>
            <person name="Zhang Z."/>
            <person name="Zhang Y."/>
            <person name="Huang X."/>
            <person name="Su Z."/>
            <person name="Tong W."/>
            <person name="Li J."/>
            <person name="Tong Z."/>
            <person name="Li S."/>
            <person name="Ye J."/>
            <person name="Wang L."/>
            <person name="Fang L."/>
            <person name="Lei T."/>
            <person name="Chen C.-S."/>
            <person name="Chen H.-C."/>
            <person name="Xu Z."/>
            <person name="Li H."/>
            <person name="Huang H."/>
            <person name="Zhang F."/>
            <person name="Xu H."/>
            <person name="Li N."/>
            <person name="Zhao C."/>
            <person name="Li S."/>
            <person name="Dong L."/>
            <person name="Huang Y."/>
            <person name="Li L."/>
            <person name="Xi Y."/>
            <person name="Qi Q."/>
            <person name="Li W."/>
            <person name="Zhang B."/>
            <person name="Hu W."/>
            <person name="Zhang Y."/>
            <person name="Tian X."/>
            <person name="Jiao Y."/>
            <person name="Liang X."/>
            <person name="Jin J."/>
            <person name="Gao L."/>
            <person name="Zheng W."/>
            <person name="Hao B."/>
            <person name="Liu S.-M."/>
            <person name="Wang W."/>
            <person name="Yuan L."/>
            <person name="Cao M."/>
            <person name="McDermott J."/>
            <person name="Samudrala R."/>
            <person name="Wang J."/>
            <person name="Wong G.K.-S."/>
            <person name="Yang H."/>
        </authorList>
    </citation>
    <scope>NUCLEOTIDE SEQUENCE [LARGE SCALE GENOMIC DNA]</scope>
    <source>
        <strain>cv. Nipponbare</strain>
    </source>
</reference>
<reference key="6">
    <citation type="journal article" date="2005" name="Plant Cell Physiol.">
        <title>Genome-wide identification of the rice calcium-dependent protein kinase and its closely related kinase gene families: comprehensive analysis of the CDPKs gene family in rice.</title>
        <authorList>
            <person name="Asano T."/>
            <person name="Tanaka N."/>
            <person name="Yang G."/>
            <person name="Hayashi N."/>
            <person name="Komatsu S."/>
        </authorList>
    </citation>
    <scope>GENE FAMILY</scope>
    <scope>NOMENCLATURE</scope>
    <scope>TISSUE SPECIFICITY</scope>
</reference>
<accession>Q8LPZ7</accession>
<accession>Q0JI08</accession>
<sequence>MGNCCRSPAAAAREDVKSSHFPASAGKKKPHQARNGGVGGGGGGGGGGGGGGGAGQKRLPVLGEEGCELIGGIDDKYALDRELGRGEFGVTYLCMDRDTKELLACKSISKRKLRTAVDVEDVRREVAIMRHLPKSASIVSLREACEDEGAVHLVMELCEGGELFDRIVARGHYTERAAANVTRTIVEVVQLCHRHGVIHRDLKPENFLFANKKENSPLKAIDFGLSIFFKPGEKFSEIVGSPYYMAPEVLKRNYGPEIDIWSAGVILYILLCGVPPFWAETEQGVAQAILRGNIDFKREPWPNVSENAKDLVRRMLEPDPKLRLTAKQVLEHPWLQNAKKAPNVPLGDIVKSRLKQFSRMNRFKRRALRVIADHLSAEEVEDIKEMFKAMDTDNDGIVSYEELKSGIAKFGSHLAESEVQMLIEAVDTNGKDALDYGEFLAVSLHLQRMANDEHLRRAFLFFDKDGNGYIEPEELREALVDDGAGDSMEVVNDILQEVDTDKDGKISYDEFVAMMKTGTDWRKASRHYSRGRFNSLSMKLIKDGSVKLVNE</sequence>
<name>CDPK3_ORYSJ</name>
<proteinExistence type="evidence at transcript level"/>
<feature type="initiator methionine" description="Removed" evidence="2">
    <location>
        <position position="1"/>
    </location>
</feature>
<feature type="chain" id="PRO_0000437548" description="Calcium-dependent protein kinase 3">
    <location>
        <begin position="2"/>
        <end position="551"/>
    </location>
</feature>
<feature type="domain" description="Protein kinase" evidence="3">
    <location>
        <begin position="77"/>
        <end position="335"/>
    </location>
</feature>
<feature type="domain" description="EF-hand 1" evidence="4">
    <location>
        <begin position="378"/>
        <end position="413"/>
    </location>
</feature>
<feature type="domain" description="EF-hand 2" evidence="4">
    <location>
        <begin position="414"/>
        <end position="449"/>
    </location>
</feature>
<feature type="domain" description="EF-hand 3" evidence="4">
    <location>
        <begin position="450"/>
        <end position="485"/>
    </location>
</feature>
<feature type="domain" description="EF-hand 4" evidence="4">
    <location>
        <begin position="486"/>
        <end position="521"/>
    </location>
</feature>
<feature type="region of interest" description="Disordered" evidence="5">
    <location>
        <begin position="1"/>
        <end position="57"/>
    </location>
</feature>
<feature type="region of interest" description="Autoinhibitory domain" evidence="1">
    <location>
        <begin position="341"/>
        <end position="371"/>
    </location>
</feature>
<feature type="compositionally biased region" description="Gly residues" evidence="5">
    <location>
        <begin position="36"/>
        <end position="55"/>
    </location>
</feature>
<feature type="active site" description="Proton acceptor" evidence="3">
    <location>
        <position position="201"/>
    </location>
</feature>
<feature type="binding site" evidence="3">
    <location>
        <begin position="83"/>
        <end position="91"/>
    </location>
    <ligand>
        <name>ATP</name>
        <dbReference type="ChEBI" id="CHEBI:30616"/>
    </ligand>
</feature>
<feature type="binding site" evidence="3">
    <location>
        <position position="106"/>
    </location>
    <ligand>
        <name>ATP</name>
        <dbReference type="ChEBI" id="CHEBI:30616"/>
    </ligand>
</feature>
<feature type="binding site" evidence="4">
    <location>
        <position position="391"/>
    </location>
    <ligand>
        <name>Ca(2+)</name>
        <dbReference type="ChEBI" id="CHEBI:29108"/>
        <label>1</label>
    </ligand>
</feature>
<feature type="binding site" evidence="4">
    <location>
        <position position="393"/>
    </location>
    <ligand>
        <name>Ca(2+)</name>
        <dbReference type="ChEBI" id="CHEBI:29108"/>
        <label>1</label>
    </ligand>
</feature>
<feature type="binding site" evidence="4">
    <location>
        <position position="395"/>
    </location>
    <ligand>
        <name>Ca(2+)</name>
        <dbReference type="ChEBI" id="CHEBI:29108"/>
        <label>1</label>
    </ligand>
</feature>
<feature type="binding site" evidence="4">
    <location>
        <position position="402"/>
    </location>
    <ligand>
        <name>Ca(2+)</name>
        <dbReference type="ChEBI" id="CHEBI:29108"/>
        <label>1</label>
    </ligand>
</feature>
<feature type="binding site" evidence="8">
    <location>
        <position position="427"/>
    </location>
    <ligand>
        <name>Ca(2+)</name>
        <dbReference type="ChEBI" id="CHEBI:29108"/>
        <label>2</label>
    </ligand>
</feature>
<feature type="binding site" evidence="8">
    <location>
        <position position="429"/>
    </location>
    <ligand>
        <name>Ca(2+)</name>
        <dbReference type="ChEBI" id="CHEBI:29108"/>
        <label>2</label>
    </ligand>
</feature>
<feature type="binding site" evidence="8">
    <location>
        <position position="438"/>
    </location>
    <ligand>
        <name>Ca(2+)</name>
        <dbReference type="ChEBI" id="CHEBI:29108"/>
        <label>2</label>
    </ligand>
</feature>
<feature type="binding site" evidence="4">
    <location>
        <position position="463"/>
    </location>
    <ligand>
        <name>Ca(2+)</name>
        <dbReference type="ChEBI" id="CHEBI:29108"/>
        <label>3</label>
    </ligand>
</feature>
<feature type="binding site" evidence="4">
    <location>
        <position position="465"/>
    </location>
    <ligand>
        <name>Ca(2+)</name>
        <dbReference type="ChEBI" id="CHEBI:29108"/>
        <label>3</label>
    </ligand>
</feature>
<feature type="binding site" evidence="4">
    <location>
        <position position="467"/>
    </location>
    <ligand>
        <name>Ca(2+)</name>
        <dbReference type="ChEBI" id="CHEBI:29108"/>
        <label>3</label>
    </ligand>
</feature>
<feature type="binding site" evidence="4">
    <location>
        <position position="469"/>
    </location>
    <ligand>
        <name>Ca(2+)</name>
        <dbReference type="ChEBI" id="CHEBI:29108"/>
        <label>3</label>
    </ligand>
</feature>
<feature type="binding site" evidence="4">
    <location>
        <position position="474"/>
    </location>
    <ligand>
        <name>Ca(2+)</name>
        <dbReference type="ChEBI" id="CHEBI:29108"/>
        <label>3</label>
    </ligand>
</feature>
<feature type="binding site" evidence="4">
    <location>
        <position position="499"/>
    </location>
    <ligand>
        <name>Ca(2+)</name>
        <dbReference type="ChEBI" id="CHEBI:29108"/>
        <label>4</label>
    </ligand>
</feature>
<feature type="binding site" evidence="4">
    <location>
        <position position="501"/>
    </location>
    <ligand>
        <name>Ca(2+)</name>
        <dbReference type="ChEBI" id="CHEBI:29108"/>
        <label>4</label>
    </ligand>
</feature>
<feature type="binding site" evidence="4">
    <location>
        <position position="503"/>
    </location>
    <ligand>
        <name>Ca(2+)</name>
        <dbReference type="ChEBI" id="CHEBI:29108"/>
        <label>4</label>
    </ligand>
</feature>
<feature type="binding site" evidence="4">
    <location>
        <position position="505"/>
    </location>
    <ligand>
        <name>Ca(2+)</name>
        <dbReference type="ChEBI" id="CHEBI:29108"/>
        <label>4</label>
    </ligand>
</feature>
<feature type="binding site" evidence="4">
    <location>
        <position position="510"/>
    </location>
    <ligand>
        <name>Ca(2+)</name>
        <dbReference type="ChEBI" id="CHEBI:29108"/>
        <label>4</label>
    </ligand>
</feature>
<feature type="lipid moiety-binding region" description="N-myristoyl glycine" evidence="2">
    <location>
        <position position="2"/>
    </location>
</feature>